<sequence length="12" mass="1211">ILGTILGLLKGL</sequence>
<feature type="peptide" id="PRO_0000044212" description="Protonectin" evidence="3 4">
    <location>
        <begin position="1"/>
        <end position="12"/>
    </location>
</feature>
<feature type="peptide" id="PRO_0000458823" description="Protonectin (1-6)" evidence="5">
    <location>
        <begin position="1"/>
        <end position="6"/>
    </location>
</feature>
<feature type="short sequence motif" description="Dimerization motif 1" evidence="18">
    <location>
        <begin position="3"/>
        <end position="7"/>
    </location>
</feature>
<feature type="short sequence motif" description="Dimerization motif 2" evidence="18">
    <location>
        <begin position="7"/>
        <end position="11"/>
    </location>
</feature>
<feature type="modified residue" description="Leucine amide; in protonection (1-6)" evidence="5">
    <location>
        <position position="6"/>
    </location>
</feature>
<feature type="modified residue" description="Leucine amide; in protonection" evidence="3 4 5">
    <location>
        <position position="12"/>
    </location>
</feature>
<feature type="mutagenesis site" description="Loss of antibacterial activity, and loss of alpha-helix structure." evidence="6">
    <original>L</original>
    <variation>P</variation>
    <location>
        <position position="6"/>
    </location>
</feature>
<feature type="mutagenesis site" description="Loss of antibacterial activity, and loss of alpha-helix structure." evidence="6">
    <original>G</original>
    <variation>P</variation>
    <location>
        <position position="7"/>
    </location>
</feature>
<feature type="mutagenesis site" description="Loss of antibacterial activity, and loss of alpha-helix structure." evidence="6">
    <original>L</original>
    <variation>P</variation>
    <location>
        <position position="8"/>
    </location>
</feature>
<feature type="helix" evidence="20">
    <location>
        <begin position="2"/>
        <end position="5"/>
    </location>
</feature>
<feature type="turn" evidence="20">
    <location>
        <begin position="6"/>
        <end position="9"/>
    </location>
</feature>
<keyword id="KW-0002">3D-structure</keyword>
<keyword id="KW-0027">Amidation</keyword>
<keyword id="KW-0044">Antibiotic</keyword>
<keyword id="KW-0929">Antimicrobial</keyword>
<keyword id="KW-0145">Chemotaxis</keyword>
<keyword id="KW-0903">Direct protein sequencing</keyword>
<keyword id="KW-0295">Fungicide</keyword>
<keyword id="KW-1213">G-protein coupled receptor impairing toxin</keyword>
<keyword id="KW-0391">Immunity</keyword>
<keyword id="KW-0399">Innate immunity</keyword>
<keyword id="KW-0467">Mast cell degranulation</keyword>
<keyword id="KW-0472">Membrane</keyword>
<keyword id="KW-0677">Repeat</keyword>
<keyword id="KW-0964">Secreted</keyword>
<keyword id="KW-1052">Target cell membrane</keyword>
<keyword id="KW-1053">Target membrane</keyword>
<keyword id="KW-0800">Toxin</keyword>
<proteinExistence type="evidence at protein level"/>
<name>PROTO_AGEPP</name>
<accession>P69437</accession>
<dbReference type="PDB" id="6N68">
    <property type="method" value="NMR"/>
    <property type="chains" value="A=1-12"/>
</dbReference>
<dbReference type="PDB" id="7JGY">
    <property type="method" value="NMR"/>
    <property type="chains" value="A=1-12"/>
</dbReference>
<dbReference type="PDBsum" id="6N68"/>
<dbReference type="PDBsum" id="7JGY"/>
<dbReference type="BMRB" id="P69437"/>
<dbReference type="SMR" id="P69437"/>
<dbReference type="GO" id="GO:0005576">
    <property type="term" value="C:extracellular region"/>
    <property type="evidence" value="ECO:0007669"/>
    <property type="project" value="UniProtKB-SubCell"/>
</dbReference>
<dbReference type="GO" id="GO:0016020">
    <property type="term" value="C:membrane"/>
    <property type="evidence" value="ECO:0007669"/>
    <property type="project" value="UniProtKB-KW"/>
</dbReference>
<dbReference type="GO" id="GO:0044218">
    <property type="term" value="C:other organism cell membrane"/>
    <property type="evidence" value="ECO:0007669"/>
    <property type="project" value="UniProtKB-KW"/>
</dbReference>
<dbReference type="GO" id="GO:0090729">
    <property type="term" value="F:toxin activity"/>
    <property type="evidence" value="ECO:0007669"/>
    <property type="project" value="UniProtKB-KW"/>
</dbReference>
<dbReference type="GO" id="GO:0006935">
    <property type="term" value="P:chemotaxis"/>
    <property type="evidence" value="ECO:0007669"/>
    <property type="project" value="UniProtKB-KW"/>
</dbReference>
<dbReference type="GO" id="GO:0042742">
    <property type="term" value="P:defense response to bacterium"/>
    <property type="evidence" value="ECO:0007669"/>
    <property type="project" value="UniProtKB-KW"/>
</dbReference>
<dbReference type="GO" id="GO:0050832">
    <property type="term" value="P:defense response to fungus"/>
    <property type="evidence" value="ECO:0007669"/>
    <property type="project" value="UniProtKB-KW"/>
</dbReference>
<dbReference type="GO" id="GO:0045087">
    <property type="term" value="P:innate immune response"/>
    <property type="evidence" value="ECO:0007669"/>
    <property type="project" value="UniProtKB-KW"/>
</dbReference>
<dbReference type="GO" id="GO:0031640">
    <property type="term" value="P:killing of cells of another organism"/>
    <property type="evidence" value="ECO:0007669"/>
    <property type="project" value="UniProtKB-KW"/>
</dbReference>
<comment type="function">
    <molecule>Protonectin</molecule>
    <text evidence="1 2 3 4 5 6 7 8 9">Potent antimicrobial peptide that acts by disruption of the integrity of the membrane, thanks to its alpha-helical conformation in the membrane (PubMed:23836163, PubMed:26209560). Shows potent antibacterial activity against both Gram-positive and Gram-negative bacteria (MIC=4-128 uM) (By similarity) (PubMed:15225564, PubMed:20600225, PubMed:23836163, PubMed:28299840). Is also active on yeasts (mainly tested on Candida cells, MIC=4-128 uM), by disrupting the membrane integrity and inducing the production of cellular reactive oxygen species (ROS) (By similarity) (PubMed:26209560, PubMed:28299840). In addition, inhibits the formation of yeast biofilms and kills the adherent fungi cells (PubMed:26209560). Has relative binding specificity with the yeast polysaccharide laminarin, but not with the yeast polysaccharide mannan (PubMed:26209560). Also has mast cell degranulation activity, and induces a potent chemotaxis in polymorphonucleated leukocyte (PMNL) cells (PubMed:15052574, PubMed:15225564, PubMed:20600225). Its mast cell degranulation activity may be related to the activation of G-protein coupled receptors in mast cells as well as interaction with other proteins located in cell endosomal membranes in the mast cells (By similarity). Shows weak hemolytic activity (EC(50)=80 uM) (PubMed:15052574, PubMed:15225564, PubMed:20600225, PubMed:28299840). In vivo, exhibits anti-nociceptive activity (at 8 nmol, intracerebroventricular injection) (PubMed:34090029). Is toxic to cancer (Melanoma MM96L, and colorectal cancer HCT 116) and non-cancer cell lines (HaCaT, and HEK293) (By similarity). Is also much more toxic to metastatic breast cancer cell lines (MDA-MB-231) than to non-cancerous epithelial breast cell lines (MCF-10) (By similarity) (PubMed:15052574, PubMed:15225564, PubMed:20600225, PubMed:23836163, PubMed:26209560, PubMed:28299840, PubMed:34090029).</text>
</comment>
<comment type="function">
    <molecule>Protonectin (1-6)</molecule>
    <text evidence="5 9">Has higher chemotactic activity for polymorphonucleated leukocyte (PMNL) cells than protonectin. Has no antibacterial, and mast cell degranulation activities alone, but its presence potentiates protonectin on these two activities (PubMed:20600225). Has no hemolytic activity alone, but its presence potentiates protonectin activity on both rat and human erythrocytes (PubMed:20600225, PubMed:34090029). Has no cytotoxic activity towards both metastatic breast cancer cells (MDA-MB-231) and epithelial breast cells (MCF-10), and its presence does not (or very weakly) change protonectin cytotoxicity on these cells (PubMed:34090029).</text>
</comment>
<comment type="subunit">
    <molecule>Protonectin</molecule>
    <text evidence="5 9">May form homodimer or heterodimer with protonectin (1-6) (PubMed:20600225). Its tendency to aggregate, which depends on the membrane characteristics, is decreased by the presence of protonectin (1-6) (PubMed:34090029).</text>
</comment>
<comment type="subunit">
    <molecule>Protonectin (1-6)</molecule>
    <text evidence="5">May form homodimer or heterodimer with protonectin.</text>
</comment>
<comment type="subcellular location">
    <subcellularLocation>
        <location evidence="3 4">Secreted</location>
    </subcellularLocation>
    <subcellularLocation>
        <location evidence="6">Target cell membrane</location>
    </subcellularLocation>
    <text evidence="6 9">Assumes an amphipathic alpha-helical conformation in a membrane-like environment (PubMed:23836163, PubMed:34090029). Does not affect lipid packing, suggesting a superficial interaction with the membrane (PubMed:34090029).</text>
</comment>
<comment type="tissue specificity">
    <text evidence="16 17">Expressed by the venom gland.</text>
</comment>
<comment type="mass spectrometry" mass="1207.8" method="Electrospray" evidence="3">
    <molecule>Protonectin</molecule>
    <text>Monoisotopic mass.</text>
</comment>
<comment type="mass spectrometry" mass="1208.64" method="Electrospray" evidence="4">
    <molecule>Protonectin</molecule>
    <text>Monoisotopic mass.</text>
</comment>
<comment type="mass spectrometry" mass="1209.31" method="Electrospray" evidence="5">
    <molecule>Protonectin</molecule>
    <text>Monoisotopic mass.</text>
</comment>
<comment type="mass spectrometry" mass="627.59" method="Electrospray" evidence="5">
    <molecule>Protonectin (1-6)</molecule>
    <text>Monoisotopic mass.</text>
</comment>
<comment type="miscellaneous">
    <text evidence="8">Two derivatives of protonectin with substitutions of all the amino acid residues (D-prt) or the Lys residue (D-Lys-prt) with the corresponding D-amino acids have been synthesized. Both derivatives D-prt and D-Lys-prt exhibit strong antimicrobial activity against bacteria and fungi, and both of them could disrupt the integrity of membrane and lead the cell death. D-prt has similar hemolytic activity than protonectin, while D-Lys-prt has significantly lower activity. D-Lys-prt keeps typical alpha-helical structure in the membrane mimicking environment, while D-prt shows left hand alpha-helical structure. It is noteworthy that D-prt shows strong stability against trypsin, chymotrypsin and the human serum, while D-Lys-prt only shows strong stability against trypsin. Stability of D-Lys-prt and D-prt is enhanced by 100 and 1000 times compared to wild-type protonectin, respectively.</text>
</comment>
<comment type="miscellaneous">
    <text evidence="15">The primary structure of this peptide is identical to that of protonectins from Protonectarina sylveirae (AC P0C1R1).</text>
</comment>
<comment type="similarity">
    <text evidence="15">Belongs to the MCD family. Protonectin subfamily.</text>
</comment>
<protein>
    <recommendedName>
        <fullName evidence="11 13 14">Protonectin</fullName>
        <shortName evidence="14">PTN</shortName>
    </recommendedName>
    <alternativeName>
        <fullName evidence="10">Agelaia-chemotactic peptide</fullName>
        <shortName evidence="10">Agelaia-CP</shortName>
    </alternativeName>
    <component>
        <recommendedName>
            <fullName evidence="12 14">Protonectin (1-6)</fullName>
            <shortName evidence="12 14">PNT (1-6)</shortName>
        </recommendedName>
    </component>
</protein>
<reference key="1">
    <citation type="journal article" date="2004" name="Rapid Commun. Mass Spectrom.">
        <title>Structural characterization of novel chemotactic and mastoparan peptides from the venom of the social wasp Agelaiapallipes pallipes by high-performance liquid chromatography/electrospray ionization tandem mass spectrometry.</title>
        <authorList>
            <person name="Mendes M.A."/>
            <person name="Monson de Souza B."/>
            <person name="Delazari dos Santos L."/>
            <person name="Palma M.S."/>
        </authorList>
    </citation>
    <scope>PROTEIN SEQUENCE</scope>
    <scope>FUNCTION</scope>
    <scope>AMIDATION AT LEU-12</scope>
    <scope>MASS SPECTROMETRY</scope>
    <scope>SUBCELLULAR LOCATION</scope>
    <source>
        <tissue>Venom</tissue>
    </source>
</reference>
<reference key="2">
    <citation type="journal article" date="2004" name="Toxicon">
        <title>Structural and biological characterization of two novel peptides from the venom of the neotropical social wasp Agelaia pallipes pallipes.</title>
        <authorList>
            <person name="Mendes M.A."/>
            <person name="de Souza B.M."/>
            <person name="Marques M.R."/>
            <person name="Palma M.S."/>
        </authorList>
    </citation>
    <scope>PROTEIN SEQUENCE</scope>
    <scope>FUNCTION</scope>
    <scope>AMIDATION AT LEU-12</scope>
    <scope>SYNTHESIS</scope>
    <scope>MASS SPECTROMETRY</scope>
    <scope>SUBCELLULAR LOCATION</scope>
    <source>
        <tissue>Venom</tissue>
    </source>
</reference>
<reference key="3">
    <citation type="journal article" date="2010" name="Toxicon">
        <title>Protonectin (1-6): a novel chemotactic peptide from the venom of the social wasp Agelaia pallipes pallipes.</title>
        <authorList>
            <person name="Baptista-Saidemberg N.B."/>
            <person name="Saidemberg D.M."/>
            <person name="de Souza B.M."/>
            <person name="Cesar-Tognoli L.M."/>
            <person name="Ferreira V.M."/>
            <person name="Mendes M.A."/>
            <person name="dos Santos Cabrera M.P."/>
            <person name="Ruggiero Neto J."/>
            <person name="Palma M.S."/>
        </authorList>
    </citation>
    <scope>PROTEIN SEQUENCE</scope>
    <scope>PROTEIN SEQUENCE OF 1-6</scope>
    <scope>FUNCTION</scope>
    <scope>AMIDATION AT LEU-6</scope>
    <scope>SYNTHESIS</scope>
    <scope>MASS SPECTROMETRY</scope>
    <scope>SUBCELLULAR LOCATION</scope>
    <scope>SUBUNIT</scope>
    <source>
        <tissue>Venom</tissue>
    </source>
</reference>
<reference key="4">
    <citation type="journal article" date="2013" name="Antimicrob. Agents Chemother.">
        <title>Membrane perturbation action mode and structure-activity relationships of Protonectin, a novel antimicrobial peptide from the venom of the neotropical social wasp Agelaia pallipes pallipes.</title>
        <authorList>
            <person name="Wang K."/>
            <person name="Dang W."/>
            <person name="Yan J."/>
            <person name="Chen R."/>
            <person name="Liu X."/>
            <person name="Yan W."/>
            <person name="Zhang B."/>
            <person name="Xie J."/>
            <person name="Zhang J."/>
            <person name="Wang R."/>
        </authorList>
    </citation>
    <scope>FUNCTION</scope>
    <scope>SYNTHESIS</scope>
    <scope>MUTAGENESIS OF LEU-6; GLY-7 AND LEU-8</scope>
</reference>
<reference key="5">
    <citation type="journal article" date="2015" name="Biochim. Biophys. Acta">
        <title>Antimicrobial peptide protonectin disturbs the membrane integrity and induces ROS production in yeast cells.</title>
        <authorList>
            <person name="Wang K."/>
            <person name="Dang W."/>
            <person name="Xie J."/>
            <person name="Zhu R."/>
            <person name="Sun M."/>
            <person name="Jia F."/>
            <person name="Zhao Y."/>
            <person name="An X."/>
            <person name="Qiu S."/>
            <person name="Li X."/>
            <person name="Ma Z."/>
            <person name="Yan W."/>
            <person name="Wang R."/>
        </authorList>
    </citation>
    <scope>FUNCTION ON YEASTS</scope>
    <scope>SYNTHESIS</scope>
</reference>
<reference key="6">
    <citation type="journal article" date="2017" name="J. Pept. Sci.">
        <title>Antimicrobial activity and stability of protonectin with D-amino acid substitutions.</title>
        <authorList>
            <person name="Qiu S."/>
            <person name="Zhu R."/>
            <person name="Zhao Y."/>
            <person name="An X."/>
            <person name="Jia F."/>
            <person name="Peng J."/>
            <person name="Ma Z."/>
            <person name="Zhu Y."/>
            <person name="Wang J."/>
            <person name="Su J."/>
            <person name="Wang Q."/>
            <person name="Wang H."/>
            <person name="Li Y."/>
            <person name="Wang K."/>
            <person name="Yan W."/>
            <person name="Wang R."/>
        </authorList>
    </citation>
    <scope>FUNCTION</scope>
    <scope>FUNCTION OF D-PEPTIDE ANALOGS</scope>
    <scope>SYNTHESIS</scope>
</reference>
<reference evidence="19" key="7">
    <citation type="journal article" date="2021" name="J. Colloid Interface Sci.">
        <title>Protonectin peptides target lipids, act at the interface and selectively kill metastatic breast cancer cells while preserving morphological integrity.</title>
        <authorList>
            <person name="Batista Martins D."/>
            <person name="Fadel V."/>
            <person name="Oliveira F.D."/>
            <person name="Gaspar D."/>
            <person name="Alvares D.S."/>
            <person name="Castanho M.A.R.B."/>
            <person name="dos Santos Cabrera M.P."/>
        </authorList>
    </citation>
    <scope>STRUCTURE BY NMR</scope>
    <scope>FUNCTION</scope>
    <scope>SYNTHESIS</scope>
    <scope>SUBUNIT</scope>
    <scope>SUBCELLULAR LOCATION</scope>
</reference>
<evidence type="ECO:0000250" key="1">
    <source>
        <dbReference type="UniProtKB" id="P01514"/>
    </source>
</evidence>
<evidence type="ECO:0000250" key="2">
    <source>
        <dbReference type="UniProtKB" id="P84914"/>
    </source>
</evidence>
<evidence type="ECO:0000269" key="3">
    <source>
    </source>
</evidence>
<evidence type="ECO:0000269" key="4">
    <source>
    </source>
</evidence>
<evidence type="ECO:0000269" key="5">
    <source>
    </source>
</evidence>
<evidence type="ECO:0000269" key="6">
    <source>
    </source>
</evidence>
<evidence type="ECO:0000269" key="7">
    <source>
    </source>
</evidence>
<evidence type="ECO:0000269" key="8">
    <source>
    </source>
</evidence>
<evidence type="ECO:0000269" key="9">
    <source>
    </source>
</evidence>
<evidence type="ECO:0000303" key="10">
    <source>
    </source>
</evidence>
<evidence type="ECO:0000303" key="11">
    <source>
    </source>
</evidence>
<evidence type="ECO:0000303" key="12">
    <source>
    </source>
</evidence>
<evidence type="ECO:0000303" key="13">
    <source>
    </source>
</evidence>
<evidence type="ECO:0000303" key="14">
    <source>
    </source>
</evidence>
<evidence type="ECO:0000305" key="15"/>
<evidence type="ECO:0000305" key="16">
    <source>
    </source>
</evidence>
<evidence type="ECO:0000305" key="17">
    <source>
    </source>
</evidence>
<evidence type="ECO:0000305" key="18">
    <source>
    </source>
</evidence>
<evidence type="ECO:0000312" key="19">
    <source>
        <dbReference type="PDB" id="6N68"/>
    </source>
</evidence>
<evidence type="ECO:0007829" key="20">
    <source>
        <dbReference type="PDB" id="6N68"/>
    </source>
</evidence>
<organism>
    <name type="scientific">Agelaia pallipes pallipes</name>
    <name type="common">Neotropical social wasp</name>
    <dbReference type="NCBI Taxonomy" id="313352"/>
    <lineage>
        <taxon>Eukaryota</taxon>
        <taxon>Metazoa</taxon>
        <taxon>Ecdysozoa</taxon>
        <taxon>Arthropoda</taxon>
        <taxon>Hexapoda</taxon>
        <taxon>Insecta</taxon>
        <taxon>Pterygota</taxon>
        <taxon>Neoptera</taxon>
        <taxon>Endopterygota</taxon>
        <taxon>Hymenoptera</taxon>
        <taxon>Apocrita</taxon>
        <taxon>Aculeata</taxon>
        <taxon>Vespoidea</taxon>
        <taxon>Vespidae</taxon>
        <taxon>Polistinae</taxon>
        <taxon>Epiponini</taxon>
        <taxon>Agelaia</taxon>
    </lineage>
</organism>